<feature type="transit peptide" description="Mitochondrion" evidence="2">
    <location>
        <begin position="1"/>
        <end position="70"/>
    </location>
</feature>
<feature type="chain" id="PRO_0000333681" description="Mitochondrial distribution and morphology protein 32">
    <location>
        <begin position="71"/>
        <end position="622"/>
    </location>
</feature>
<feature type="topological domain" description="Mitochondrial matrix" evidence="2">
    <location>
        <begin position="71"/>
        <end position="123"/>
    </location>
</feature>
<feature type="transmembrane region" description="Helical" evidence="2">
    <location>
        <begin position="124"/>
        <end position="144"/>
    </location>
</feature>
<feature type="topological domain" description="Mitochondrial intermembrane" evidence="2">
    <location>
        <begin position="145"/>
        <end position="601"/>
    </location>
</feature>
<feature type="transmembrane region" description="Helical" evidence="2">
    <location>
        <begin position="602"/>
        <end position="622"/>
    </location>
</feature>
<keyword id="KW-0472">Membrane</keyword>
<keyword id="KW-0496">Mitochondrion</keyword>
<keyword id="KW-0999">Mitochondrion inner membrane</keyword>
<keyword id="KW-0809">Transit peptide</keyword>
<keyword id="KW-0812">Transmembrane</keyword>
<keyword id="KW-1133">Transmembrane helix</keyword>
<dbReference type="EMBL" id="AAFW02000030">
    <property type="protein sequence ID" value="EDN64006.1"/>
    <property type="status" value="ALT_INIT"/>
    <property type="molecule type" value="Genomic_DNA"/>
</dbReference>
<dbReference type="SMR" id="A6ZNZ1"/>
<dbReference type="HOGENOM" id="CLU_016236_3_0_1"/>
<dbReference type="OrthoDB" id="23633at4893"/>
<dbReference type="Proteomes" id="UP000007060">
    <property type="component" value="Unassembled WGS sequence"/>
</dbReference>
<dbReference type="GO" id="GO:0005743">
    <property type="term" value="C:mitochondrial inner membrane"/>
    <property type="evidence" value="ECO:0007669"/>
    <property type="project" value="UniProtKB-SubCell"/>
</dbReference>
<dbReference type="GO" id="GO:0000001">
    <property type="term" value="P:mitochondrion inheritance"/>
    <property type="evidence" value="ECO:0007669"/>
    <property type="project" value="InterPro"/>
</dbReference>
<dbReference type="GO" id="GO:0007005">
    <property type="term" value="P:mitochondrion organization"/>
    <property type="evidence" value="ECO:0007669"/>
    <property type="project" value="InterPro"/>
</dbReference>
<dbReference type="InterPro" id="IPR012571">
    <property type="entry name" value="Mdm31/Mdm32"/>
</dbReference>
<dbReference type="PANTHER" id="PTHR31068">
    <property type="entry name" value="MITOCHONDRIAL DISTRIBUTION AND MORPHOLOGY PROTEIN 31"/>
    <property type="match status" value="1"/>
</dbReference>
<dbReference type="PANTHER" id="PTHR31068:SF1">
    <property type="entry name" value="MITOCHONDRIAL DISTRIBUTION AND MORPHOLOGY PROTEIN 32"/>
    <property type="match status" value="1"/>
</dbReference>
<dbReference type="Pfam" id="PF08118">
    <property type="entry name" value="MDM31_MDM32"/>
    <property type="match status" value="2"/>
</dbReference>
<organism>
    <name type="scientific">Saccharomyces cerevisiae (strain YJM789)</name>
    <name type="common">Baker's yeast</name>
    <dbReference type="NCBI Taxonomy" id="307796"/>
    <lineage>
        <taxon>Eukaryota</taxon>
        <taxon>Fungi</taxon>
        <taxon>Dikarya</taxon>
        <taxon>Ascomycota</taxon>
        <taxon>Saccharomycotina</taxon>
        <taxon>Saccharomycetes</taxon>
        <taxon>Saccharomycetales</taxon>
        <taxon>Saccharomycetaceae</taxon>
        <taxon>Saccharomyces</taxon>
    </lineage>
</organism>
<sequence>MLITRLRVPTIKRPLLPITSHLVRHCIRTYVATNHGNVRPFITPYKSSLPVRCLIAQRHIRTFPSNDKFTTKASNIETILLRKNNEREFKQSLLADAKNFQERFKINLKWILIKNNRPFSLNEISIIASWLILSQILWLILSTTTFISFYLFVINSVFSQEYIHEKKIYERLLKWLLKDHKCSNQDLEITFSPEDKASMLVLSPDWESNSILIKRLNVRDEILDLDLKFHHINLNVSLKNWLLGRGLITNVSIYGIRGCLNLSNFINLVNSFQGDQKTENFLKTLNNVEITDSEILLKQSLSAQETPSLKFSIYNLSLPRLRLNHFISDILSAKTFSGSINNSLFNLFKRQQKLTAVIENNNKNRMASSKFDFTDNNQENYRTVTHQDDPNYVTTLRLNFININDLKFNGNGKFNWLKDGQVEILADIMLTNSTSHLSSESKYAVVDLKVTCRDLKTTFPQEPPVLSTGDSIVSLDELKPIITFINSYEGMANPILKDFSENERLTNSIIWNSPNVSINRQRKSYPLTTKVTSNSTKEIIKFHNQPNTNANEIVLRCKMVKNLSDLQLININQILDQITMELYVDLTKIVEDWEFKNKNDWMKQWGTTFASQLLLFGFGAMV</sequence>
<reference key="1">
    <citation type="journal article" date="2007" name="Proc. Natl. Acad. Sci. U.S.A.">
        <title>Genome sequencing and comparative analysis of Saccharomyces cerevisiae strain YJM789.</title>
        <authorList>
            <person name="Wei W."/>
            <person name="McCusker J.H."/>
            <person name="Hyman R.W."/>
            <person name="Jones T."/>
            <person name="Ning Y."/>
            <person name="Cao Z."/>
            <person name="Gu Z."/>
            <person name="Bruno D."/>
            <person name="Miranda M."/>
            <person name="Nguyen M."/>
            <person name="Wilhelmy J."/>
            <person name="Komp C."/>
            <person name="Tamse R."/>
            <person name="Wang X."/>
            <person name="Jia P."/>
            <person name="Luedi P."/>
            <person name="Oefner P.J."/>
            <person name="David L."/>
            <person name="Dietrich F.S."/>
            <person name="Li Y."/>
            <person name="Davis R.W."/>
            <person name="Steinmetz L.M."/>
        </authorList>
    </citation>
    <scope>NUCLEOTIDE SEQUENCE [LARGE SCALE GENOMIC DNA]</scope>
    <source>
        <strain>YJM789</strain>
    </source>
</reference>
<accession>A6ZNZ1</accession>
<gene>
    <name type="primary">MDM32</name>
    <name type="ORF">SCY_5209</name>
</gene>
<protein>
    <recommendedName>
        <fullName>Mitochondrial distribution and morphology protein 32</fullName>
    </recommendedName>
</protein>
<name>MDM32_YEAS7</name>
<comment type="function">
    <text evidence="1">Involved in the organization of the mitochondrial membranes and the global structure of the mitochondria. Also required for mitochondrial distribution and mobility as well as for the maintenance of mitochondrial DNA nucleoids structures (By similarity).</text>
</comment>
<comment type="subunit">
    <text evidence="1">Interacts with MDM31. Participates in a complex of about 175 kDa (By similarity).</text>
</comment>
<comment type="subcellular location">
    <subcellularLocation>
        <location evidence="1">Mitochondrion inner membrane</location>
        <topology evidence="1">Multi-pass membrane protein</topology>
    </subcellularLocation>
</comment>
<comment type="similarity">
    <text evidence="3">Belongs to the MDM31/MDM32 family.</text>
</comment>
<comment type="sequence caution" evidence="3">
    <conflict type="erroneous initiation">
        <sequence resource="EMBL-CDS" id="EDN64006"/>
    </conflict>
</comment>
<proteinExistence type="inferred from homology"/>
<evidence type="ECO:0000250" key="1"/>
<evidence type="ECO:0000255" key="2"/>
<evidence type="ECO:0000305" key="3"/>